<reference key="1">
    <citation type="journal article" date="2002" name="DNA Res.">
        <title>Complete genomic sequence of nitrogen-fixing symbiotic bacterium Bradyrhizobium japonicum USDA110.</title>
        <authorList>
            <person name="Kaneko T."/>
            <person name="Nakamura Y."/>
            <person name="Sato S."/>
            <person name="Minamisawa K."/>
            <person name="Uchiumi T."/>
            <person name="Sasamoto S."/>
            <person name="Watanabe A."/>
            <person name="Idesawa K."/>
            <person name="Iriguchi M."/>
            <person name="Kawashima K."/>
            <person name="Kohara M."/>
            <person name="Matsumoto M."/>
            <person name="Shimpo S."/>
            <person name="Tsuruoka H."/>
            <person name="Wada T."/>
            <person name="Yamada M."/>
            <person name="Tabata S."/>
        </authorList>
    </citation>
    <scope>NUCLEOTIDE SEQUENCE [LARGE SCALE GENOMIC DNA]</scope>
    <source>
        <strain>JCM 10833 / BCRC 13528 / IAM 13628 / NBRC 14792 / USDA 110</strain>
    </source>
</reference>
<dbReference type="EC" id="5.4.2.10" evidence="1"/>
<dbReference type="EMBL" id="BA000040">
    <property type="protein sequence ID" value="BAC52673.1"/>
    <property type="status" value="ALT_INIT"/>
    <property type="molecule type" value="Genomic_DNA"/>
</dbReference>
<dbReference type="RefSeq" id="NP_774048.1">
    <property type="nucleotide sequence ID" value="NC_004463.1"/>
</dbReference>
<dbReference type="RefSeq" id="WP_028174702.1">
    <property type="nucleotide sequence ID" value="NC_004463.1"/>
</dbReference>
<dbReference type="SMR" id="Q89DN1"/>
<dbReference type="FunCoup" id="Q89DN1">
    <property type="interactions" value="512"/>
</dbReference>
<dbReference type="STRING" id="224911.AAV28_34715"/>
<dbReference type="EnsemblBacteria" id="BAC52673">
    <property type="protein sequence ID" value="BAC52673"/>
    <property type="gene ID" value="BAC52673"/>
</dbReference>
<dbReference type="GeneID" id="46494364"/>
<dbReference type="KEGG" id="bja:bll7408"/>
<dbReference type="PATRIC" id="fig|224911.44.peg.7496"/>
<dbReference type="eggNOG" id="COG1109">
    <property type="taxonomic scope" value="Bacteria"/>
</dbReference>
<dbReference type="HOGENOM" id="CLU_016950_7_0_5"/>
<dbReference type="InParanoid" id="Q89DN1"/>
<dbReference type="OrthoDB" id="9803322at2"/>
<dbReference type="Proteomes" id="UP000002526">
    <property type="component" value="Chromosome"/>
</dbReference>
<dbReference type="GO" id="GO:0005829">
    <property type="term" value="C:cytosol"/>
    <property type="evidence" value="ECO:0000318"/>
    <property type="project" value="GO_Central"/>
</dbReference>
<dbReference type="GO" id="GO:0000287">
    <property type="term" value="F:magnesium ion binding"/>
    <property type="evidence" value="ECO:0007669"/>
    <property type="project" value="UniProtKB-UniRule"/>
</dbReference>
<dbReference type="GO" id="GO:0008966">
    <property type="term" value="F:phosphoglucosamine mutase activity"/>
    <property type="evidence" value="ECO:0000318"/>
    <property type="project" value="GO_Central"/>
</dbReference>
<dbReference type="GO" id="GO:0004615">
    <property type="term" value="F:phosphomannomutase activity"/>
    <property type="evidence" value="ECO:0000318"/>
    <property type="project" value="GO_Central"/>
</dbReference>
<dbReference type="GO" id="GO:0005975">
    <property type="term" value="P:carbohydrate metabolic process"/>
    <property type="evidence" value="ECO:0007669"/>
    <property type="project" value="InterPro"/>
</dbReference>
<dbReference type="GO" id="GO:0009252">
    <property type="term" value="P:peptidoglycan biosynthetic process"/>
    <property type="evidence" value="ECO:0000318"/>
    <property type="project" value="GO_Central"/>
</dbReference>
<dbReference type="GO" id="GO:0006048">
    <property type="term" value="P:UDP-N-acetylglucosamine biosynthetic process"/>
    <property type="evidence" value="ECO:0000318"/>
    <property type="project" value="GO_Central"/>
</dbReference>
<dbReference type="CDD" id="cd05802">
    <property type="entry name" value="GlmM"/>
    <property type="match status" value="1"/>
</dbReference>
<dbReference type="FunFam" id="3.30.310.50:FF:000001">
    <property type="entry name" value="Phosphoglucosamine mutase"/>
    <property type="match status" value="1"/>
</dbReference>
<dbReference type="FunFam" id="3.40.120.10:FF:000001">
    <property type="entry name" value="Phosphoglucosamine mutase"/>
    <property type="match status" value="1"/>
</dbReference>
<dbReference type="FunFam" id="3.40.120.10:FF:000003">
    <property type="entry name" value="Phosphoglucosamine mutase"/>
    <property type="match status" value="1"/>
</dbReference>
<dbReference type="Gene3D" id="3.40.120.10">
    <property type="entry name" value="Alpha-D-Glucose-1,6-Bisphosphate, subunit A, domain 3"/>
    <property type="match status" value="3"/>
</dbReference>
<dbReference type="Gene3D" id="3.30.310.50">
    <property type="entry name" value="Alpha-D-phosphohexomutase, C-terminal domain"/>
    <property type="match status" value="1"/>
</dbReference>
<dbReference type="HAMAP" id="MF_01554_B">
    <property type="entry name" value="GlmM_B"/>
    <property type="match status" value="1"/>
</dbReference>
<dbReference type="InterPro" id="IPR005844">
    <property type="entry name" value="A-D-PHexomutase_a/b/a-I"/>
</dbReference>
<dbReference type="InterPro" id="IPR016055">
    <property type="entry name" value="A-D-PHexomutase_a/b/a-I/II/III"/>
</dbReference>
<dbReference type="InterPro" id="IPR005845">
    <property type="entry name" value="A-D-PHexomutase_a/b/a-II"/>
</dbReference>
<dbReference type="InterPro" id="IPR005846">
    <property type="entry name" value="A-D-PHexomutase_a/b/a-III"/>
</dbReference>
<dbReference type="InterPro" id="IPR005843">
    <property type="entry name" value="A-D-PHexomutase_C"/>
</dbReference>
<dbReference type="InterPro" id="IPR036900">
    <property type="entry name" value="A-D-PHexomutase_C_sf"/>
</dbReference>
<dbReference type="InterPro" id="IPR005841">
    <property type="entry name" value="Alpha-D-phosphohexomutase_SF"/>
</dbReference>
<dbReference type="InterPro" id="IPR006352">
    <property type="entry name" value="GlmM_bact"/>
</dbReference>
<dbReference type="InterPro" id="IPR050060">
    <property type="entry name" value="Phosphoglucosamine_mutase"/>
</dbReference>
<dbReference type="NCBIfam" id="TIGR01455">
    <property type="entry name" value="glmM"/>
    <property type="match status" value="1"/>
</dbReference>
<dbReference type="NCBIfam" id="NF008139">
    <property type="entry name" value="PRK10887.1"/>
    <property type="match status" value="1"/>
</dbReference>
<dbReference type="PANTHER" id="PTHR42946:SF1">
    <property type="entry name" value="PHOSPHOGLUCOMUTASE (ALPHA-D-GLUCOSE-1,6-BISPHOSPHATE-DEPENDENT)"/>
    <property type="match status" value="1"/>
</dbReference>
<dbReference type="PANTHER" id="PTHR42946">
    <property type="entry name" value="PHOSPHOHEXOSE MUTASE"/>
    <property type="match status" value="1"/>
</dbReference>
<dbReference type="Pfam" id="PF02878">
    <property type="entry name" value="PGM_PMM_I"/>
    <property type="match status" value="1"/>
</dbReference>
<dbReference type="Pfam" id="PF02879">
    <property type="entry name" value="PGM_PMM_II"/>
    <property type="match status" value="1"/>
</dbReference>
<dbReference type="Pfam" id="PF02880">
    <property type="entry name" value="PGM_PMM_III"/>
    <property type="match status" value="1"/>
</dbReference>
<dbReference type="Pfam" id="PF00408">
    <property type="entry name" value="PGM_PMM_IV"/>
    <property type="match status" value="1"/>
</dbReference>
<dbReference type="PRINTS" id="PR00509">
    <property type="entry name" value="PGMPMM"/>
</dbReference>
<dbReference type="SUPFAM" id="SSF55957">
    <property type="entry name" value="Phosphoglucomutase, C-terminal domain"/>
    <property type="match status" value="1"/>
</dbReference>
<dbReference type="SUPFAM" id="SSF53738">
    <property type="entry name" value="Phosphoglucomutase, first 3 domains"/>
    <property type="match status" value="3"/>
</dbReference>
<accession>Q89DN1</accession>
<sequence length="447" mass="48276">MSRKYFGTDGIRGRANGLITPELALKVGQAAGLAFQRGDHRHRVVIGKDTRLSGYMIEYAMVAGFTSVGMDVLLVGPMPTPAVAMLTKSMRADLGVMISASHNLFEDNGIKLFGPQGFKLSDDVEKQIEQLLDEPIDKRLAQSASLGRARRIDGVHDRYIEFAKRTLPRDLSLDGLRVVVDCANGAAYKVVPEALWELGADVVPIGVEPDGFNINKDCGSTSPEALSKKVREMRADIGIALDGDADRVILVDERGHVVDGDQLLAVIAQSWKEDGRLSRPGIVATVMSNLGLERFLKGQGLDLVRTPVGDRYVLEQMLSGGYNLGGEQSGHIILSDYATTGDGFVAALQVLAVVQKSRRPVSEVCHRFDPLPQILKNVRHKGGKPLDDSDVKSAISDGEKRLNGHGRLLIRSSGTEPVIRVMGEGEDRILVEDVVDTIVSALGQAAA</sequence>
<protein>
    <recommendedName>
        <fullName evidence="1">Phosphoglucosamine mutase</fullName>
        <ecNumber evidence="1">5.4.2.10</ecNumber>
    </recommendedName>
</protein>
<proteinExistence type="inferred from homology"/>
<keyword id="KW-0413">Isomerase</keyword>
<keyword id="KW-0460">Magnesium</keyword>
<keyword id="KW-0479">Metal-binding</keyword>
<keyword id="KW-0597">Phosphoprotein</keyword>
<keyword id="KW-1185">Reference proteome</keyword>
<feature type="chain" id="PRO_0000147857" description="Phosphoglucosamine mutase">
    <location>
        <begin position="1"/>
        <end position="447"/>
    </location>
</feature>
<feature type="active site" description="Phosphoserine intermediate" evidence="1">
    <location>
        <position position="101"/>
    </location>
</feature>
<feature type="binding site" description="via phosphate group" evidence="1">
    <location>
        <position position="101"/>
    </location>
    <ligand>
        <name>Mg(2+)</name>
        <dbReference type="ChEBI" id="CHEBI:18420"/>
    </ligand>
</feature>
<feature type="binding site" evidence="1">
    <location>
        <position position="242"/>
    </location>
    <ligand>
        <name>Mg(2+)</name>
        <dbReference type="ChEBI" id="CHEBI:18420"/>
    </ligand>
</feature>
<feature type="binding site" evidence="1">
    <location>
        <position position="244"/>
    </location>
    <ligand>
        <name>Mg(2+)</name>
        <dbReference type="ChEBI" id="CHEBI:18420"/>
    </ligand>
</feature>
<feature type="binding site" evidence="1">
    <location>
        <position position="246"/>
    </location>
    <ligand>
        <name>Mg(2+)</name>
        <dbReference type="ChEBI" id="CHEBI:18420"/>
    </ligand>
</feature>
<feature type="modified residue" description="Phosphoserine" evidence="1">
    <location>
        <position position="101"/>
    </location>
</feature>
<comment type="function">
    <text evidence="1">Catalyzes the conversion of glucosamine-6-phosphate to glucosamine-1-phosphate.</text>
</comment>
<comment type="catalytic activity">
    <reaction evidence="1">
        <text>alpha-D-glucosamine 1-phosphate = D-glucosamine 6-phosphate</text>
        <dbReference type="Rhea" id="RHEA:23424"/>
        <dbReference type="ChEBI" id="CHEBI:58516"/>
        <dbReference type="ChEBI" id="CHEBI:58725"/>
        <dbReference type="EC" id="5.4.2.10"/>
    </reaction>
</comment>
<comment type="cofactor">
    <cofactor evidence="1">
        <name>Mg(2+)</name>
        <dbReference type="ChEBI" id="CHEBI:18420"/>
    </cofactor>
    <text evidence="1">Binds 1 Mg(2+) ion per subunit.</text>
</comment>
<comment type="PTM">
    <text evidence="1">Activated by phosphorylation.</text>
</comment>
<comment type="similarity">
    <text evidence="1">Belongs to the phosphohexose mutase family.</text>
</comment>
<comment type="sequence caution" evidence="2">
    <conflict type="erroneous initiation">
        <sequence resource="EMBL-CDS" id="BAC52673"/>
    </conflict>
</comment>
<organism>
    <name type="scientific">Bradyrhizobium diazoefficiens (strain JCM 10833 / BCRC 13528 / IAM 13628 / NBRC 14792 / USDA 110)</name>
    <dbReference type="NCBI Taxonomy" id="224911"/>
    <lineage>
        <taxon>Bacteria</taxon>
        <taxon>Pseudomonadati</taxon>
        <taxon>Pseudomonadota</taxon>
        <taxon>Alphaproteobacteria</taxon>
        <taxon>Hyphomicrobiales</taxon>
        <taxon>Nitrobacteraceae</taxon>
        <taxon>Bradyrhizobium</taxon>
    </lineage>
</organism>
<name>GLMM_BRADU</name>
<gene>
    <name evidence="1" type="primary">glmM</name>
    <name type="ordered locus">bll7408</name>
</gene>
<evidence type="ECO:0000255" key="1">
    <source>
        <dbReference type="HAMAP-Rule" id="MF_01554"/>
    </source>
</evidence>
<evidence type="ECO:0000305" key="2"/>